<gene>
    <name evidence="6" type="primary">comX</name>
</gene>
<organism>
    <name type="scientific">Bacillus mojavensis</name>
    <dbReference type="NCBI Taxonomy" id="72360"/>
    <lineage>
        <taxon>Bacteria</taxon>
        <taxon>Bacillati</taxon>
        <taxon>Bacillota</taxon>
        <taxon>Bacilli</taxon>
        <taxon>Bacillales</taxon>
        <taxon>Bacillaceae</taxon>
        <taxon>Bacillus</taxon>
    </lineage>
</organism>
<protein>
    <recommendedName>
        <fullName evidence="7">ComX pheromone</fullName>
    </recommendedName>
    <alternativeName>
        <fullName evidence="8">Competence pheromone</fullName>
    </alternativeName>
</protein>
<accession>Q9K5K8</accession>
<sequence>MQEMVGYLIKYPNVLREVMEGNACLLGVDKDQSECIINGFKGLEIYSMLDWKY</sequence>
<comment type="function">
    <text evidence="1 3">Part of a major quorum-sensing system that regulates the development of genetic competence (PubMed:12067344). Acts through the activation of the two-component regulatory system ComP/ComA composed of a sensor histidine kinase, ComP, and a response regulator, ComA (By similarity).</text>
</comment>
<comment type="subunit">
    <text evidence="1">Interacts directly with the sensor histidine kinase ComP and stimulates its activity.</text>
</comment>
<comment type="subcellular location">
    <subcellularLocation>
        <location evidence="1">Secreted</location>
    </subcellularLocation>
</comment>
<comment type="PTM">
    <text evidence="1 3 4 5">Trp-51 is modified by geranylation, which is essential for activity (PubMed:12067344, PubMed:17617699). Modified by the tryptophan prenyltransferase ComQ before export to the extracellular environment (By similarity). The type of isoprenyl derivative differs among the different pherotypes and depends on ComX primary sequence (PubMed:12067344, PubMed:14679219).</text>
</comment>
<comment type="miscellaneous">
    <text evidence="2">The DNA sequences encoding ComQ, ComX and the N-terminal two-thirds of ComP show a striking polymorphism, which determines the specificity of the quorum-sensing system in the different pherotypes of Bacillus. In ComX, the sole conserved residue is the modified tryptophan essential for the activity.</text>
</comment>
<keyword id="KW-0178">Competence</keyword>
<keyword id="KW-0449">Lipoprotein</keyword>
<keyword id="KW-0588">Pheromone</keyword>
<keyword id="KW-0636">Prenylation</keyword>
<keyword id="KW-0964">Secreted</keyword>
<feature type="propeptide" id="PRO_0000454308" evidence="5 9">
    <location>
        <begin position="1"/>
        <end position="46"/>
    </location>
</feature>
<feature type="peptide" id="PRO_0000454309" description="ComX pheromone" evidence="5 9">
    <location>
        <begin position="47"/>
        <end position="53"/>
    </location>
</feature>
<feature type="lipid moiety-binding region" description="3'-geranyl-2',N2-cyclotryptophan" evidence="5 9">
    <location>
        <position position="51"/>
    </location>
</feature>
<proteinExistence type="evidence at protein level"/>
<reference key="1">
    <citation type="journal article" date="2001" name="J. Bacteriol.">
        <title>Specificity and genetic polymorphism of the Bacillus competence quorum-sensing system.</title>
        <authorList>
            <person name="Tortosa P."/>
            <person name="Logsdon L."/>
            <person name="Kraigher B."/>
            <person name="Itoh Y."/>
            <person name="Mandic-Mulec I."/>
            <person name="Dubnau D."/>
        </authorList>
    </citation>
    <scope>NUCLEOTIDE SEQUENCE [GENOMIC DNA]</scope>
    <scope>POLYMORPHISM IN COMX; COMQ AND COMP</scope>
    <source>
        <strain>RO-H-1</strain>
    </source>
</reference>
<reference key="2">
    <citation type="journal article" date="2002" name="Mol. Microbiol.">
        <title>Specific activation of the Bacillus quorum-sensing systems by isoprenylated pheromone variants.</title>
        <authorList>
            <person name="Ansaldi M."/>
            <person name="Marolt D."/>
            <person name="Stebe T."/>
            <person name="Mandic-Mulec I."/>
            <person name="Dubnau D."/>
        </authorList>
    </citation>
    <scope>FUNCTION</scope>
    <scope>ISOPRENYLATION AT TRP-51</scope>
    <scope>IDENTIFICATION BY MASS SPECTROMETRY</scope>
    <source>
        <strain>RO-H-1</strain>
    </source>
</reference>
<reference key="3">
    <citation type="journal article" date="2004" name="J. Bacteriol.">
        <title>Diversifying selection at the Bacillus quorum-sensing locus and determinants of modification specificity during synthesis of the ComX pheromone.</title>
        <authorList>
            <person name="Ansaldi M."/>
            <person name="Dubnau D."/>
        </authorList>
    </citation>
    <scope>POLYMORPHISM</scope>
    <scope>DETERMINANTS OF MODIFICATION SPECIFICITY</scope>
</reference>
<reference key="4">
    <citation type="journal article" date="2007" name="Biosci. Biotechnol. Biochem.">
        <title>Acid labile ComX pheromone from Bacillus mojavensis RO-H-1.</title>
        <authorList>
            <person name="Okada M."/>
            <person name="Yamaguchi H."/>
            <person name="Sato I."/>
            <person name="Tsuji F."/>
            <person name="Qi J."/>
            <person name="Dubnau D."/>
            <person name="Sakagami Y."/>
        </authorList>
    </citation>
    <scope>GERANYLATION AT TRP-51</scope>
    <scope>IDENTIFICATION BY MASS SPECTROMETRY</scope>
    <source>
        <strain>RO-H-1</strain>
    </source>
</reference>
<dbReference type="EMBL" id="AY003901">
    <property type="protein sequence ID" value="AAF82177.1"/>
    <property type="molecule type" value="Genomic_DNA"/>
</dbReference>
<dbReference type="RefSeq" id="WP_010331692.1">
    <property type="nucleotide sequence ID" value="NZ_JACJGF010000001.1"/>
</dbReference>
<dbReference type="GO" id="GO:0005576">
    <property type="term" value="C:extracellular region"/>
    <property type="evidence" value="ECO:0007669"/>
    <property type="project" value="UniProtKB-SubCell"/>
</dbReference>
<dbReference type="GO" id="GO:0005186">
    <property type="term" value="F:pheromone activity"/>
    <property type="evidence" value="ECO:0007669"/>
    <property type="project" value="UniProtKB-KW"/>
</dbReference>
<dbReference type="GO" id="GO:0030420">
    <property type="term" value="P:establishment of competence for transformation"/>
    <property type="evidence" value="ECO:0007669"/>
    <property type="project" value="UniProtKB-KW"/>
</dbReference>
<dbReference type="InterPro" id="IPR009233">
    <property type="entry name" value="Competence_ComX_Bacillus"/>
</dbReference>
<dbReference type="Pfam" id="PF05952">
    <property type="entry name" value="ComX"/>
    <property type="match status" value="1"/>
</dbReference>
<name>COMX3_BACMO</name>
<evidence type="ECO:0000250" key="1">
    <source>
        <dbReference type="UniProtKB" id="P45453"/>
    </source>
</evidence>
<evidence type="ECO:0000269" key="2">
    <source>
    </source>
</evidence>
<evidence type="ECO:0000269" key="3">
    <source>
    </source>
</evidence>
<evidence type="ECO:0000269" key="4">
    <source>
    </source>
</evidence>
<evidence type="ECO:0000269" key="5">
    <source>
    </source>
</evidence>
<evidence type="ECO:0000303" key="6">
    <source>
    </source>
</evidence>
<evidence type="ECO:0000303" key="7">
    <source>
    </source>
</evidence>
<evidence type="ECO:0000305" key="8"/>
<evidence type="ECO:0000305" key="9">
    <source>
    </source>
</evidence>